<sequence length="328" mass="36687">MEKKHVTVQIQSAPPSYIKLEANEKFVYITSTMNGLSYQIAAIVSYPEKRNSSTANKEDGKLLCKENKLALLLHGSQSHKNAIYQTLLAKRLAEFGYWVLRIDFRGQGDSSDNCDPGLGRTLAQDLEDLSTVYQTVSDRSLRVQLYKTSTISLDVVVAHSRGSLAMFKFCLKLHAAESPLPSHLINCAGRYDGRGLIERCTRLHPHWQAEGGFWANGPRNGEYKDFWIPLSETYSIAGVCVPEFATIPQTCSVMSCYGMCDHIVPISAASNYARLFEGRHSLKLIENADHNYYGIEGDPNALGLPIRRGRVNYSPLVVDLIMEYLQDT</sequence>
<comment type="disruption phenotype">
    <text evidence="1">Cells are viable and do not display any phenotype.</text>
</comment>
<organism>
    <name type="scientific">Saccharomyces cerevisiae (strain ATCC 204508 / S288c)</name>
    <name type="common">Baker's yeast</name>
    <dbReference type="NCBI Taxonomy" id="559292"/>
    <lineage>
        <taxon>Eukaryota</taxon>
        <taxon>Fungi</taxon>
        <taxon>Dikarya</taxon>
        <taxon>Ascomycota</taxon>
        <taxon>Saccharomycotina</taxon>
        <taxon>Saccharomycetes</taxon>
        <taxon>Saccharomycetales</taxon>
        <taxon>Saccharomycetaceae</taxon>
        <taxon>Saccharomyces</taxon>
    </lineage>
</organism>
<dbReference type="EMBL" id="Z74105">
    <property type="protein sequence ID" value="CAA98619.1"/>
    <property type="molecule type" value="Genomic_DNA"/>
</dbReference>
<dbReference type="EMBL" id="BK006938">
    <property type="protein sequence ID" value="DAA11799.1"/>
    <property type="molecule type" value="Genomic_DNA"/>
</dbReference>
<dbReference type="PIR" id="S67592">
    <property type="entry name" value="S67592"/>
</dbReference>
<dbReference type="RefSeq" id="NP_010226.1">
    <property type="nucleotide sequence ID" value="NM_001180116.1"/>
</dbReference>
<dbReference type="BioGRID" id="32001">
    <property type="interactions" value="62"/>
</dbReference>
<dbReference type="FunCoup" id="Q07379">
    <property type="interactions" value="55"/>
</dbReference>
<dbReference type="IntAct" id="Q07379">
    <property type="interactions" value="3"/>
</dbReference>
<dbReference type="STRING" id="4932.YDL057W"/>
<dbReference type="ESTHER" id="yeast-YDL057W">
    <property type="family name" value="AlphaBeta_hydrolase"/>
</dbReference>
<dbReference type="MEROPS" id="S09.A98"/>
<dbReference type="iPTMnet" id="Q07379"/>
<dbReference type="PaxDb" id="4932-YDL057W"/>
<dbReference type="PeptideAtlas" id="Q07379"/>
<dbReference type="EnsemblFungi" id="YDL057W_mRNA">
    <property type="protein sequence ID" value="YDL057W"/>
    <property type="gene ID" value="YDL057W"/>
</dbReference>
<dbReference type="GeneID" id="851502"/>
<dbReference type="KEGG" id="sce:YDL057W"/>
<dbReference type="AGR" id="SGD:S000002215"/>
<dbReference type="SGD" id="S000002215">
    <property type="gene designation" value="YDL057W"/>
</dbReference>
<dbReference type="VEuPathDB" id="FungiDB:YDL057W"/>
<dbReference type="eggNOG" id="KOG4667">
    <property type="taxonomic scope" value="Eukaryota"/>
</dbReference>
<dbReference type="HOGENOM" id="CLU_891560_0_0_1"/>
<dbReference type="InParanoid" id="Q07379"/>
<dbReference type="OMA" id="LYASMNH"/>
<dbReference type="OrthoDB" id="449382at2759"/>
<dbReference type="BioCyc" id="YEAST:G3O-29473-MONOMER"/>
<dbReference type="BioGRID-ORCS" id="851502">
    <property type="hits" value="0 hits in 10 CRISPR screens"/>
</dbReference>
<dbReference type="PRO" id="PR:Q07379"/>
<dbReference type="Proteomes" id="UP000002311">
    <property type="component" value="Chromosome IV"/>
</dbReference>
<dbReference type="RNAct" id="Q07379">
    <property type="molecule type" value="protein"/>
</dbReference>
<dbReference type="GO" id="GO:0016020">
    <property type="term" value="C:membrane"/>
    <property type="evidence" value="ECO:0000318"/>
    <property type="project" value="GO_Central"/>
</dbReference>
<dbReference type="GO" id="GO:0047372">
    <property type="term" value="F:monoacylglycerol lipase activity"/>
    <property type="evidence" value="ECO:0000318"/>
    <property type="project" value="GO_Central"/>
</dbReference>
<dbReference type="FunFam" id="3.40.50.1820:FF:000424">
    <property type="entry name" value="YDL057W-like protein"/>
    <property type="match status" value="1"/>
</dbReference>
<dbReference type="Gene3D" id="3.40.50.1820">
    <property type="entry name" value="alpha/beta hydrolase"/>
    <property type="match status" value="1"/>
</dbReference>
<dbReference type="InterPro" id="IPR029058">
    <property type="entry name" value="AB_hydrolase_fold"/>
</dbReference>
<dbReference type="InterPro" id="IPR022742">
    <property type="entry name" value="Hydrolase_4"/>
</dbReference>
<dbReference type="PANTHER" id="PTHR42886:SF53">
    <property type="entry name" value="ALPHA_BETA-HYDROLASES SUPERFAMILY PROTEIN"/>
    <property type="match status" value="1"/>
</dbReference>
<dbReference type="PANTHER" id="PTHR42886">
    <property type="entry name" value="RE40534P-RELATED"/>
    <property type="match status" value="1"/>
</dbReference>
<dbReference type="Pfam" id="PF12146">
    <property type="entry name" value="Hydrolase_4"/>
    <property type="match status" value="1"/>
</dbReference>
<dbReference type="SUPFAM" id="SSF53474">
    <property type="entry name" value="alpha/beta-Hydrolases"/>
    <property type="match status" value="1"/>
</dbReference>
<proteinExistence type="predicted"/>
<reference key="1">
    <citation type="journal article" date="1997" name="Nature">
        <title>The nucleotide sequence of Saccharomyces cerevisiae chromosome IV.</title>
        <authorList>
            <person name="Jacq C."/>
            <person name="Alt-Moerbe J."/>
            <person name="Andre B."/>
            <person name="Arnold W."/>
            <person name="Bahr A."/>
            <person name="Ballesta J.P.G."/>
            <person name="Bargues M."/>
            <person name="Baron L."/>
            <person name="Becker A."/>
            <person name="Biteau N."/>
            <person name="Bloecker H."/>
            <person name="Blugeon C."/>
            <person name="Boskovic J."/>
            <person name="Brandt P."/>
            <person name="Brueckner M."/>
            <person name="Buitrago M.J."/>
            <person name="Coster F."/>
            <person name="Delaveau T."/>
            <person name="del Rey F."/>
            <person name="Dujon B."/>
            <person name="Eide L.G."/>
            <person name="Garcia-Cantalejo J.M."/>
            <person name="Goffeau A."/>
            <person name="Gomez-Peris A."/>
            <person name="Granotier C."/>
            <person name="Hanemann V."/>
            <person name="Hankeln T."/>
            <person name="Hoheisel J.D."/>
            <person name="Jaeger W."/>
            <person name="Jimenez A."/>
            <person name="Jonniaux J.-L."/>
            <person name="Kraemer C."/>
            <person name="Kuester H."/>
            <person name="Laamanen P."/>
            <person name="Legros Y."/>
            <person name="Louis E.J."/>
            <person name="Moeller-Rieker S."/>
            <person name="Monnet A."/>
            <person name="Moro M."/>
            <person name="Mueller-Auer S."/>
            <person name="Nussbaumer B."/>
            <person name="Paricio N."/>
            <person name="Paulin L."/>
            <person name="Perea J."/>
            <person name="Perez-Alonso M."/>
            <person name="Perez-Ortin J.E."/>
            <person name="Pohl T.M."/>
            <person name="Prydz H."/>
            <person name="Purnelle B."/>
            <person name="Rasmussen S.W."/>
            <person name="Remacha M.A."/>
            <person name="Revuelta J.L."/>
            <person name="Rieger M."/>
            <person name="Salom D."/>
            <person name="Saluz H.P."/>
            <person name="Saiz J.E."/>
            <person name="Saren A.-M."/>
            <person name="Schaefer M."/>
            <person name="Scharfe M."/>
            <person name="Schmidt E.R."/>
            <person name="Schneider C."/>
            <person name="Scholler P."/>
            <person name="Schwarz S."/>
            <person name="Soler-Mira A."/>
            <person name="Urrestarazu L.A."/>
            <person name="Verhasselt P."/>
            <person name="Vissers S."/>
            <person name="Voet M."/>
            <person name="Volckaert G."/>
            <person name="Wagner G."/>
            <person name="Wambutt R."/>
            <person name="Wedler E."/>
            <person name="Wedler H."/>
            <person name="Woelfl S."/>
            <person name="Harris D.E."/>
            <person name="Bowman S."/>
            <person name="Brown D."/>
            <person name="Churcher C.M."/>
            <person name="Connor R."/>
            <person name="Dedman K."/>
            <person name="Gentles S."/>
            <person name="Hamlin N."/>
            <person name="Hunt S."/>
            <person name="Jones L."/>
            <person name="McDonald S."/>
            <person name="Murphy L.D."/>
            <person name="Niblett D."/>
            <person name="Odell C."/>
            <person name="Oliver K."/>
            <person name="Rajandream M.A."/>
            <person name="Richards C."/>
            <person name="Shore L."/>
            <person name="Walsh S.V."/>
            <person name="Barrell B.G."/>
            <person name="Dietrich F.S."/>
            <person name="Mulligan J.T."/>
            <person name="Allen E."/>
            <person name="Araujo R."/>
            <person name="Aviles E."/>
            <person name="Berno A."/>
            <person name="Carpenter J."/>
            <person name="Chen E."/>
            <person name="Cherry J.M."/>
            <person name="Chung E."/>
            <person name="Duncan M."/>
            <person name="Hunicke-Smith S."/>
            <person name="Hyman R.W."/>
            <person name="Komp C."/>
            <person name="Lashkari D."/>
            <person name="Lew H."/>
            <person name="Lin D."/>
            <person name="Mosedale D."/>
            <person name="Nakahara K."/>
            <person name="Namath A."/>
            <person name="Oefner P."/>
            <person name="Oh C."/>
            <person name="Petel F.X."/>
            <person name="Roberts D."/>
            <person name="Schramm S."/>
            <person name="Schroeder M."/>
            <person name="Shogren T."/>
            <person name="Shroff N."/>
            <person name="Winant A."/>
            <person name="Yelton M.A."/>
            <person name="Botstein D."/>
            <person name="Davis R.W."/>
            <person name="Johnston M."/>
            <person name="Andrews S."/>
            <person name="Brinkman R."/>
            <person name="Cooper J."/>
            <person name="Ding H."/>
            <person name="Du Z."/>
            <person name="Favello A."/>
            <person name="Fulton L."/>
            <person name="Gattung S."/>
            <person name="Greco T."/>
            <person name="Hallsworth K."/>
            <person name="Hawkins J."/>
            <person name="Hillier L.W."/>
            <person name="Jier M."/>
            <person name="Johnson D."/>
            <person name="Johnston L."/>
            <person name="Kirsten J."/>
            <person name="Kucaba T."/>
            <person name="Langston Y."/>
            <person name="Latreille P."/>
            <person name="Le T."/>
            <person name="Mardis E."/>
            <person name="Menezes S."/>
            <person name="Miller N."/>
            <person name="Nhan M."/>
            <person name="Pauley A."/>
            <person name="Peluso D."/>
            <person name="Rifkin L."/>
            <person name="Riles L."/>
            <person name="Taich A."/>
            <person name="Trevaskis E."/>
            <person name="Vignati D."/>
            <person name="Wilcox L."/>
            <person name="Wohldman P."/>
            <person name="Vaudin M."/>
            <person name="Wilson R."/>
            <person name="Waterston R."/>
            <person name="Albermann K."/>
            <person name="Hani J."/>
            <person name="Heumann K."/>
            <person name="Kleine K."/>
            <person name="Mewes H.-W."/>
            <person name="Zollner A."/>
            <person name="Zaccaria P."/>
        </authorList>
    </citation>
    <scope>NUCLEOTIDE SEQUENCE [LARGE SCALE GENOMIC DNA]</scope>
    <source>
        <strain>ATCC 204508 / S288c</strain>
    </source>
</reference>
<reference key="2">
    <citation type="journal article" date="2014" name="G3 (Bethesda)">
        <title>The reference genome sequence of Saccharomyces cerevisiae: Then and now.</title>
        <authorList>
            <person name="Engel S.R."/>
            <person name="Dietrich F.S."/>
            <person name="Fisk D.G."/>
            <person name="Binkley G."/>
            <person name="Balakrishnan R."/>
            <person name="Costanzo M.C."/>
            <person name="Dwight S.S."/>
            <person name="Hitz B.C."/>
            <person name="Karra K."/>
            <person name="Nash R.S."/>
            <person name="Weng S."/>
            <person name="Wong E.D."/>
            <person name="Lloyd P."/>
            <person name="Skrzypek M.S."/>
            <person name="Miyasato S.R."/>
            <person name="Simison M."/>
            <person name="Cherry J.M."/>
        </authorList>
    </citation>
    <scope>GENOME REANNOTATION</scope>
    <source>
        <strain>ATCC 204508 / S288c</strain>
    </source>
</reference>
<reference key="3">
    <citation type="journal article" date="1999" name="Yeast">
        <title>Disruption and functional analysis of seven ORFs on chromosome IV: YDL057w, YDL012c, YDL010w, YDL009c, YDL008w (APC11), YDL005c (MED2) and YDL003w (MCD1).</title>
        <authorList>
            <person name="Smith K.N."/>
            <person name="Iwanejko L."/>
            <person name="Loeillet S."/>
            <person name="Fabre F."/>
            <person name="Nicolas A."/>
        </authorList>
    </citation>
    <scope>DISRUPTION PHENOTYPE</scope>
</reference>
<gene>
    <name type="ordered locus">YDL057W</name>
</gene>
<feature type="chain" id="PRO_0000248458" description="Putative uncharacterized protein YDL057W">
    <location>
        <begin position="1"/>
        <end position="328"/>
    </location>
</feature>
<keyword id="KW-1185">Reference proteome</keyword>
<accession>Q07379</accession>
<accession>D6VRT9</accession>
<evidence type="ECO:0000269" key="1">
    <source>
    </source>
</evidence>
<protein>
    <recommendedName>
        <fullName>Putative uncharacterized protein YDL057W</fullName>
    </recommendedName>
</protein>
<name>YD057_YEAST</name>